<organism>
    <name type="scientific">Pyrobaculum calidifontis (strain DSM 21063 / JCM 11548 / VA1)</name>
    <dbReference type="NCBI Taxonomy" id="410359"/>
    <lineage>
        <taxon>Archaea</taxon>
        <taxon>Thermoproteota</taxon>
        <taxon>Thermoprotei</taxon>
        <taxon>Thermoproteales</taxon>
        <taxon>Thermoproteaceae</taxon>
        <taxon>Pyrobaculum</taxon>
    </lineage>
</organism>
<evidence type="ECO:0000255" key="1">
    <source>
        <dbReference type="HAMAP-Rule" id="MF_00420"/>
    </source>
</evidence>
<protein>
    <recommendedName>
        <fullName evidence="1">Phosphoribosylformylglycinamidine synthase subunit PurL</fullName>
        <shortName evidence="1">FGAM synthase</shortName>
        <ecNumber evidence="1">6.3.5.3</ecNumber>
    </recommendedName>
    <alternativeName>
        <fullName evidence="1">Formylglycinamide ribonucleotide amidotransferase subunit II</fullName>
        <shortName evidence="1">FGAR amidotransferase II</shortName>
        <shortName evidence="1">FGAR-AT II</shortName>
    </alternativeName>
    <alternativeName>
        <fullName evidence="1">Glutamine amidotransferase PurL</fullName>
    </alternativeName>
    <alternativeName>
        <fullName evidence="1">Phosphoribosylformylglycinamidine synthase subunit II</fullName>
    </alternativeName>
</protein>
<name>PURL_PYRCJ</name>
<proteinExistence type="inferred from homology"/>
<comment type="function">
    <text evidence="1">Part of the phosphoribosylformylglycinamidine synthase complex involved in the purines biosynthetic pathway. Catalyzes the ATP-dependent conversion of formylglycinamide ribonucleotide (FGAR) and glutamine to yield formylglycinamidine ribonucleotide (FGAM) and glutamate. The FGAM synthase complex is composed of three subunits. PurQ produces an ammonia molecule by converting glutamine to glutamate. PurL transfers the ammonia molecule to FGAR to form FGAM in an ATP-dependent manner. PurS interacts with PurQ and PurL and is thought to assist in the transfer of the ammonia molecule from PurQ to PurL.</text>
</comment>
<comment type="catalytic activity">
    <reaction evidence="1">
        <text>N(2)-formyl-N(1)-(5-phospho-beta-D-ribosyl)glycinamide + L-glutamine + ATP + H2O = 2-formamido-N(1)-(5-O-phospho-beta-D-ribosyl)acetamidine + L-glutamate + ADP + phosphate + H(+)</text>
        <dbReference type="Rhea" id="RHEA:17129"/>
        <dbReference type="ChEBI" id="CHEBI:15377"/>
        <dbReference type="ChEBI" id="CHEBI:15378"/>
        <dbReference type="ChEBI" id="CHEBI:29985"/>
        <dbReference type="ChEBI" id="CHEBI:30616"/>
        <dbReference type="ChEBI" id="CHEBI:43474"/>
        <dbReference type="ChEBI" id="CHEBI:58359"/>
        <dbReference type="ChEBI" id="CHEBI:147286"/>
        <dbReference type="ChEBI" id="CHEBI:147287"/>
        <dbReference type="ChEBI" id="CHEBI:456216"/>
        <dbReference type="EC" id="6.3.5.3"/>
    </reaction>
</comment>
<comment type="pathway">
    <text evidence="1">Purine metabolism; IMP biosynthesis via de novo pathway; 5-amino-1-(5-phospho-D-ribosyl)imidazole from N(2)-formyl-N(1)-(5-phospho-D-ribosyl)glycinamide: step 1/2.</text>
</comment>
<comment type="subunit">
    <text evidence="1">Monomer. Part of the FGAM synthase complex composed of 1 PurL, 1 PurQ and 2 PurS subunits.</text>
</comment>
<comment type="subcellular location">
    <subcellularLocation>
        <location evidence="1">Cytoplasm</location>
    </subcellularLocation>
</comment>
<comment type="similarity">
    <text evidence="1">Belongs to the FGAMS family.</text>
</comment>
<accession>A3MXD4</accession>
<reference key="1">
    <citation type="submission" date="2007-02" db="EMBL/GenBank/DDBJ databases">
        <title>Complete sequence of Pyrobaculum calidifontis JCM 11548.</title>
        <authorList>
            <consortium name="US DOE Joint Genome Institute"/>
            <person name="Copeland A."/>
            <person name="Lucas S."/>
            <person name="Lapidus A."/>
            <person name="Barry K."/>
            <person name="Glavina del Rio T."/>
            <person name="Dalin E."/>
            <person name="Tice H."/>
            <person name="Pitluck S."/>
            <person name="Chain P."/>
            <person name="Malfatti S."/>
            <person name="Shin M."/>
            <person name="Vergez L."/>
            <person name="Schmutz J."/>
            <person name="Larimer F."/>
            <person name="Land M."/>
            <person name="Hauser L."/>
            <person name="Kyrpides N."/>
            <person name="Mikhailova N."/>
            <person name="Cozen A.E."/>
            <person name="Fitz-Gibbon S.T."/>
            <person name="House C.H."/>
            <person name="Saltikov C."/>
            <person name="Lowe T.M."/>
            <person name="Richardson P."/>
        </authorList>
    </citation>
    <scope>NUCLEOTIDE SEQUENCE [LARGE SCALE GENOMIC DNA]</scope>
    <source>
        <strain>DSM 21063 / JCM 11548 / VA1</strain>
    </source>
</reference>
<dbReference type="EC" id="6.3.5.3" evidence="1"/>
<dbReference type="EMBL" id="CP000561">
    <property type="protein sequence ID" value="ABO09301.1"/>
    <property type="molecule type" value="Genomic_DNA"/>
</dbReference>
<dbReference type="RefSeq" id="WP_011850559.1">
    <property type="nucleotide sequence ID" value="NC_009073.1"/>
</dbReference>
<dbReference type="SMR" id="A3MXD4"/>
<dbReference type="STRING" id="410359.Pcal_1885"/>
<dbReference type="GeneID" id="4908391"/>
<dbReference type="KEGG" id="pcl:Pcal_1885"/>
<dbReference type="eggNOG" id="arCOG00641">
    <property type="taxonomic scope" value="Archaea"/>
</dbReference>
<dbReference type="HOGENOM" id="CLU_003100_0_1_2"/>
<dbReference type="OrthoDB" id="8251at2157"/>
<dbReference type="UniPathway" id="UPA00074">
    <property type="reaction ID" value="UER00128"/>
</dbReference>
<dbReference type="Proteomes" id="UP000001431">
    <property type="component" value="Chromosome"/>
</dbReference>
<dbReference type="GO" id="GO:0005737">
    <property type="term" value="C:cytoplasm"/>
    <property type="evidence" value="ECO:0007669"/>
    <property type="project" value="UniProtKB-SubCell"/>
</dbReference>
<dbReference type="GO" id="GO:0005524">
    <property type="term" value="F:ATP binding"/>
    <property type="evidence" value="ECO:0007669"/>
    <property type="project" value="UniProtKB-UniRule"/>
</dbReference>
<dbReference type="GO" id="GO:0000287">
    <property type="term" value="F:magnesium ion binding"/>
    <property type="evidence" value="ECO:0007669"/>
    <property type="project" value="UniProtKB-UniRule"/>
</dbReference>
<dbReference type="GO" id="GO:0004642">
    <property type="term" value="F:phosphoribosylformylglycinamidine synthase activity"/>
    <property type="evidence" value="ECO:0007669"/>
    <property type="project" value="UniProtKB-UniRule"/>
</dbReference>
<dbReference type="GO" id="GO:0006189">
    <property type="term" value="P:'de novo' IMP biosynthetic process"/>
    <property type="evidence" value="ECO:0007669"/>
    <property type="project" value="UniProtKB-UniRule"/>
</dbReference>
<dbReference type="CDD" id="cd02203">
    <property type="entry name" value="PurL_repeat1"/>
    <property type="match status" value="1"/>
</dbReference>
<dbReference type="CDD" id="cd02204">
    <property type="entry name" value="PurL_repeat2"/>
    <property type="match status" value="1"/>
</dbReference>
<dbReference type="Gene3D" id="3.90.650.10">
    <property type="entry name" value="PurM-like C-terminal domain"/>
    <property type="match status" value="2"/>
</dbReference>
<dbReference type="Gene3D" id="3.30.1330.10">
    <property type="entry name" value="PurM-like, N-terminal domain"/>
    <property type="match status" value="2"/>
</dbReference>
<dbReference type="HAMAP" id="MF_00420">
    <property type="entry name" value="PurL_2"/>
    <property type="match status" value="1"/>
</dbReference>
<dbReference type="InterPro" id="IPR010074">
    <property type="entry name" value="PRibForGlyAmidine_synth_PurL"/>
</dbReference>
<dbReference type="InterPro" id="IPR041609">
    <property type="entry name" value="PurL_linker"/>
</dbReference>
<dbReference type="InterPro" id="IPR010918">
    <property type="entry name" value="PurM-like_C_dom"/>
</dbReference>
<dbReference type="InterPro" id="IPR036676">
    <property type="entry name" value="PurM-like_C_sf"/>
</dbReference>
<dbReference type="InterPro" id="IPR016188">
    <property type="entry name" value="PurM-like_N"/>
</dbReference>
<dbReference type="InterPro" id="IPR036921">
    <property type="entry name" value="PurM-like_N_sf"/>
</dbReference>
<dbReference type="NCBIfam" id="TIGR01736">
    <property type="entry name" value="FGAM_synth_II"/>
    <property type="match status" value="1"/>
</dbReference>
<dbReference type="NCBIfam" id="NF002290">
    <property type="entry name" value="PRK01213.1"/>
    <property type="match status" value="1"/>
</dbReference>
<dbReference type="PANTHER" id="PTHR43555">
    <property type="entry name" value="PHOSPHORIBOSYLFORMYLGLYCINAMIDINE SYNTHASE SUBUNIT PURL"/>
    <property type="match status" value="1"/>
</dbReference>
<dbReference type="PANTHER" id="PTHR43555:SF1">
    <property type="entry name" value="PHOSPHORIBOSYLFORMYLGLYCINAMIDINE SYNTHASE SUBUNIT PURL"/>
    <property type="match status" value="1"/>
</dbReference>
<dbReference type="Pfam" id="PF00586">
    <property type="entry name" value="AIRS"/>
    <property type="match status" value="2"/>
</dbReference>
<dbReference type="Pfam" id="PF02769">
    <property type="entry name" value="AIRS_C"/>
    <property type="match status" value="2"/>
</dbReference>
<dbReference type="Pfam" id="PF18072">
    <property type="entry name" value="FGAR-AT_linker"/>
    <property type="match status" value="1"/>
</dbReference>
<dbReference type="PIRSF" id="PIRSF001587">
    <property type="entry name" value="FGAM_synthase_II"/>
    <property type="match status" value="1"/>
</dbReference>
<dbReference type="SUPFAM" id="SSF56042">
    <property type="entry name" value="PurM C-terminal domain-like"/>
    <property type="match status" value="2"/>
</dbReference>
<dbReference type="SUPFAM" id="SSF55326">
    <property type="entry name" value="PurM N-terminal domain-like"/>
    <property type="match status" value="2"/>
</dbReference>
<gene>
    <name evidence="1" type="primary">purL</name>
    <name type="ordered locus">Pcal_1885</name>
</gene>
<feature type="chain" id="PRO_1000050338" description="Phosphoribosylformylglycinamidine synthase subunit PurL">
    <location>
        <begin position="1"/>
        <end position="693"/>
    </location>
</feature>
<feature type="active site" evidence="1">
    <location>
        <position position="34"/>
    </location>
</feature>
<feature type="active site" description="Proton acceptor" evidence="1">
    <location>
        <position position="80"/>
    </location>
</feature>
<feature type="binding site" evidence="1">
    <location>
        <position position="37"/>
    </location>
    <ligand>
        <name>ATP</name>
        <dbReference type="ChEBI" id="CHEBI:30616"/>
    </ligand>
</feature>
<feature type="binding site" evidence="1">
    <location>
        <position position="76"/>
    </location>
    <ligand>
        <name>ATP</name>
        <dbReference type="ChEBI" id="CHEBI:30616"/>
    </ligand>
</feature>
<feature type="binding site" evidence="1">
    <location>
        <position position="78"/>
    </location>
    <ligand>
        <name>Mg(2+)</name>
        <dbReference type="ChEBI" id="CHEBI:18420"/>
        <label>1</label>
    </ligand>
</feature>
<feature type="binding site" evidence="1">
    <location>
        <begin position="79"/>
        <end position="82"/>
    </location>
    <ligand>
        <name>substrate</name>
    </ligand>
</feature>
<feature type="binding site" evidence="1">
    <location>
        <position position="101"/>
    </location>
    <ligand>
        <name>substrate</name>
    </ligand>
</feature>
<feature type="binding site" evidence="1">
    <location>
        <position position="102"/>
    </location>
    <ligand>
        <name>Mg(2+)</name>
        <dbReference type="ChEBI" id="CHEBI:18420"/>
        <label>2</label>
    </ligand>
</feature>
<feature type="binding site" evidence="1">
    <location>
        <position position="222"/>
    </location>
    <ligand>
        <name>substrate</name>
    </ligand>
</feature>
<feature type="binding site" evidence="1">
    <location>
        <position position="248"/>
    </location>
    <ligand>
        <name>Mg(2+)</name>
        <dbReference type="ChEBI" id="CHEBI:18420"/>
        <label>2</label>
    </ligand>
</feature>
<feature type="binding site" evidence="1">
    <location>
        <begin position="292"/>
        <end position="294"/>
    </location>
    <ligand>
        <name>substrate</name>
    </ligand>
</feature>
<feature type="binding site" evidence="1">
    <location>
        <position position="470"/>
    </location>
    <ligand>
        <name>ATP</name>
        <dbReference type="ChEBI" id="CHEBI:30616"/>
    </ligand>
</feature>
<feature type="binding site" evidence="1">
    <location>
        <position position="507"/>
    </location>
    <ligand>
        <name>ATP</name>
        <dbReference type="ChEBI" id="CHEBI:30616"/>
    </ligand>
</feature>
<feature type="binding site" evidence="1">
    <location>
        <position position="510"/>
    </location>
    <ligand>
        <name>substrate</name>
    </ligand>
</feature>
<keyword id="KW-0067">ATP-binding</keyword>
<keyword id="KW-0963">Cytoplasm</keyword>
<keyword id="KW-0436">Ligase</keyword>
<keyword id="KW-0460">Magnesium</keyword>
<keyword id="KW-0479">Metal-binding</keyword>
<keyword id="KW-0547">Nucleotide-binding</keyword>
<keyword id="KW-0658">Purine biosynthesis</keyword>
<sequence>MALTAAELEAIRRGLGRGPTPVELALFTAHWSEHCAYKSTRGRLSRLPSKAPWVVKGPGTDAPLVEVAPGLYVTFKIESHNHPSAVDPYNGAATGVGGIIRDILTVGAKPIALLVNLHFGPPQDAHAKWIAQGVVRGISDYGNRVGVPVVGGETWFDEDFTYTPIVLATCVGVVSAEDVPRGGVEAGDLFIVVGSGADKSGLGGSAFASKTLTEEEDLGAVQVADPLMGKRLIDLVQEARQCVKYIKDLGGGGLATAAAELAHWFGLGLEIDLDKIHMSDAEMGPAEVLISETQERLVLVTSEGQLPCLKALFEKYDVPYSVVGRFTEGGRLVFKWRGEVVGDVPVELAANAPVLEWPTRPYKAKPLPDLPQPPLDKAIDAVLSSPNVAKKAAIYERFDFDVGVRTVVKPGEGDAAVLKLLELGDVGIVVKGDANPRYTYLSPRLGAANAFVKAYRNVVVARGIPLAAVDSINLGSPARPEVYWQFVEAVEGLAEAAEALGVPIVGGKVSLYNEYLDKPIKPVVAVVVLGKIDDVGKAAKATWEAGDGIYLWGVTKAEVGGSEYLYRIFGEVAGEPPAVDYAVEKEILRLVGTWRPRKATDVGLGGLAAALAKMAVNSGVGADVDICKAPAETTRLDFLLFSESNGRFITAGEEGPGVKIGEAEGEKLRLRCGGTLLYKRKVEELRELMALRL</sequence>